<accession>Q9QSK2</accession>
<accession>Q9DIE2</accession>
<proteinExistence type="inferred from homology"/>
<comment type="function">
    <text>DNA-directed DNA polymerase involved in viral DNA replication.</text>
</comment>
<comment type="catalytic activity">
    <reaction>
        <text>DNA(n) + a 2'-deoxyribonucleoside 5'-triphosphate = DNA(n+1) + diphosphate</text>
        <dbReference type="Rhea" id="RHEA:22508"/>
        <dbReference type="Rhea" id="RHEA-COMP:17339"/>
        <dbReference type="Rhea" id="RHEA-COMP:17340"/>
        <dbReference type="ChEBI" id="CHEBI:33019"/>
        <dbReference type="ChEBI" id="CHEBI:61560"/>
        <dbReference type="ChEBI" id="CHEBI:173112"/>
        <dbReference type="EC" id="2.7.7.7"/>
    </reaction>
</comment>
<comment type="similarity">
    <text evidence="2">Belongs to the DNA polymerase type-B family.</text>
</comment>
<feature type="chain" id="PRO_0000376943" description="DNA polymerase 037L">
    <location>
        <begin position="1"/>
        <end position="1273"/>
    </location>
</feature>
<feature type="coiled-coil region" evidence="1">
    <location>
        <begin position="679"/>
        <end position="837"/>
    </location>
</feature>
<reference key="1">
    <citation type="journal article" date="2001" name="Virology">
        <title>Analysis of the first complete DNA sequence of an invertebrate iridovirus: coding strategy of the genome of Chilo iridescent virus.</title>
        <authorList>
            <person name="Jakob N.J."/>
            <person name="Mueller K."/>
            <person name="Bahr U."/>
            <person name="Darai G."/>
        </authorList>
    </citation>
    <scope>NUCLEOTIDE SEQUENCE [LARGE SCALE GENOMIC DNA]</scope>
</reference>
<reference key="2">
    <citation type="journal article" date="2000" name="J. Gen. Virol.">
        <title>Phylogenetic position of the Diadromus pulchellus ascovirus DNA polymerase among viruses with large double-stranded DNA genomes.</title>
        <authorList>
            <person name="Stasiak K."/>
            <person name="Demattei M.V."/>
            <person name="Federici B.A."/>
            <person name="Bigot Y."/>
        </authorList>
    </citation>
    <scope>NUCLEOTIDE SEQUENCE [GENOMIC DNA] OF 636-910</scope>
</reference>
<reference key="3">
    <citation type="journal article" date="2007" name="Virol. J.">
        <title>Comparative genomic analysis of the family Iridoviridae: re-annotating and defining the core set of iridovirus genes.</title>
        <authorList>
            <person name="Eaton H.E."/>
            <person name="Metcalf J."/>
            <person name="Penny E."/>
            <person name="Tcherepanov V."/>
            <person name="Upton C."/>
            <person name="Brunetti C.R."/>
        </authorList>
    </citation>
    <scope>GENOME REANNOTATION</scope>
</reference>
<dbReference type="EC" id="2.7.7.7"/>
<dbReference type="EMBL" id="AF303741">
    <property type="protein sequence ID" value="AAD48150.1"/>
    <property type="molecule type" value="Genomic_DNA"/>
</dbReference>
<dbReference type="EMBL" id="AJ279816">
    <property type="protein sequence ID" value="CAC19195.1"/>
    <property type="molecule type" value="Genomic_DNA"/>
</dbReference>
<dbReference type="RefSeq" id="NP_149500.1">
    <property type="nucleotide sequence ID" value="NC_003038.1"/>
</dbReference>
<dbReference type="SMR" id="Q9QSK2"/>
<dbReference type="GeneID" id="921680"/>
<dbReference type="KEGG" id="vg:921680"/>
<dbReference type="Proteomes" id="UP000001359">
    <property type="component" value="Genome"/>
</dbReference>
<dbReference type="GO" id="GO:0008296">
    <property type="term" value="F:3'-5'-DNA exonuclease activity"/>
    <property type="evidence" value="ECO:0007669"/>
    <property type="project" value="TreeGrafter"/>
</dbReference>
<dbReference type="GO" id="GO:0003677">
    <property type="term" value="F:DNA binding"/>
    <property type="evidence" value="ECO:0007669"/>
    <property type="project" value="UniProtKB-KW"/>
</dbReference>
<dbReference type="GO" id="GO:0003887">
    <property type="term" value="F:DNA-directed DNA polymerase activity"/>
    <property type="evidence" value="ECO:0007669"/>
    <property type="project" value="UniProtKB-KW"/>
</dbReference>
<dbReference type="GO" id="GO:0000166">
    <property type="term" value="F:nucleotide binding"/>
    <property type="evidence" value="ECO:0007669"/>
    <property type="project" value="InterPro"/>
</dbReference>
<dbReference type="GO" id="GO:0006287">
    <property type="term" value="P:base-excision repair, gap-filling"/>
    <property type="evidence" value="ECO:0007669"/>
    <property type="project" value="TreeGrafter"/>
</dbReference>
<dbReference type="GO" id="GO:0045004">
    <property type="term" value="P:DNA replication proofreading"/>
    <property type="evidence" value="ECO:0007669"/>
    <property type="project" value="TreeGrafter"/>
</dbReference>
<dbReference type="GO" id="GO:0006297">
    <property type="term" value="P:nucleotide-excision repair, DNA gap filling"/>
    <property type="evidence" value="ECO:0007669"/>
    <property type="project" value="TreeGrafter"/>
</dbReference>
<dbReference type="GO" id="GO:0039693">
    <property type="term" value="P:viral DNA genome replication"/>
    <property type="evidence" value="ECO:0007669"/>
    <property type="project" value="UniProtKB-KW"/>
</dbReference>
<dbReference type="Gene3D" id="1.10.132.60">
    <property type="entry name" value="DNA polymerase family B, C-terminal domain"/>
    <property type="match status" value="2"/>
</dbReference>
<dbReference type="Gene3D" id="3.30.342.10">
    <property type="entry name" value="DNA Polymerase, chain B, domain 1"/>
    <property type="match status" value="1"/>
</dbReference>
<dbReference type="Gene3D" id="1.10.287.690">
    <property type="entry name" value="Helix hairpin bin"/>
    <property type="match status" value="2"/>
</dbReference>
<dbReference type="Gene3D" id="3.90.1600.10">
    <property type="entry name" value="Palm domain of DNA polymerase"/>
    <property type="match status" value="2"/>
</dbReference>
<dbReference type="Gene3D" id="3.30.420.10">
    <property type="entry name" value="Ribonuclease H-like superfamily/Ribonuclease H"/>
    <property type="match status" value="2"/>
</dbReference>
<dbReference type="InterPro" id="IPR006172">
    <property type="entry name" value="DNA-dir_DNA_pol_B"/>
</dbReference>
<dbReference type="InterPro" id="IPR006133">
    <property type="entry name" value="DNA-dir_DNA_pol_B_exonuc"/>
</dbReference>
<dbReference type="InterPro" id="IPR006134">
    <property type="entry name" value="DNA-dir_DNA_pol_B_multi_dom"/>
</dbReference>
<dbReference type="InterPro" id="IPR043502">
    <property type="entry name" value="DNA/RNA_pol_sf"/>
</dbReference>
<dbReference type="InterPro" id="IPR042087">
    <property type="entry name" value="DNA_pol_B_thumb"/>
</dbReference>
<dbReference type="InterPro" id="IPR023211">
    <property type="entry name" value="DNA_pol_palm_dom_sf"/>
</dbReference>
<dbReference type="InterPro" id="IPR050240">
    <property type="entry name" value="DNA_pol_type-B"/>
</dbReference>
<dbReference type="InterPro" id="IPR012337">
    <property type="entry name" value="RNaseH-like_sf"/>
</dbReference>
<dbReference type="InterPro" id="IPR036397">
    <property type="entry name" value="RNaseH_sf"/>
</dbReference>
<dbReference type="PANTHER" id="PTHR10322">
    <property type="entry name" value="DNA POLYMERASE CATALYTIC SUBUNIT"/>
    <property type="match status" value="1"/>
</dbReference>
<dbReference type="PANTHER" id="PTHR10322:SF23">
    <property type="entry name" value="DNA POLYMERASE DELTA CATALYTIC SUBUNIT"/>
    <property type="match status" value="1"/>
</dbReference>
<dbReference type="Pfam" id="PF00136">
    <property type="entry name" value="DNA_pol_B"/>
    <property type="match status" value="2"/>
</dbReference>
<dbReference type="Pfam" id="PF03104">
    <property type="entry name" value="DNA_pol_B_exo1"/>
    <property type="match status" value="1"/>
</dbReference>
<dbReference type="SMART" id="SM00486">
    <property type="entry name" value="POLBc"/>
    <property type="match status" value="1"/>
</dbReference>
<dbReference type="SUPFAM" id="SSF56672">
    <property type="entry name" value="DNA/RNA polymerases"/>
    <property type="match status" value="1"/>
</dbReference>
<dbReference type="SUPFAM" id="SSF53098">
    <property type="entry name" value="Ribonuclease H-like"/>
    <property type="match status" value="2"/>
</dbReference>
<sequence>MEKTMFAYSWHQTDDETKNWSKSKESLRIYGITDDGKTICLIVNDFKPFVHVELPSSINWRQKIGGQPKVQKIMDYLNFILGDLKPVKNRTIFIDKYKLYGSNYVQTSPGVFQRKKFPYLVLFFESRKHIKNLEYKLKNTVDVPGFGKIKLNVRETNVSPILQLCVERNLPSAGWIGFKVEGRGALAGYGELVEEKKKFTDCDEEYVISKNYIYSIDKHVPVKAKVMAWDIEVYSEDGNFPDAMKPGNVVFQISCIFFIVGTSYKQKYLLTLGDPLEYTTTPINEEGCGKDTIVCKFKTEEDLIIAFSSLQKREKPHITTGWNIFNFDTTFLLKRAKLHRCLPNFLLQGFPKDQLGKEKEIKWQSKAYGTTDLKFIDCEGILCIDLMDVVQKEHKLDSYSLNFVAKHFLGSKKDDLKPKEIFICYREGIKKEVKNIVIHPLSNNLNIYLGKEEIMIENKKFKKPLKPFFRIQNTGKLVSDEDDSVFHVNYRGEVFSFLIAVHNEEKYEIKTVSEFNNYKNAYGTYTLSAQKAMAKVGKYCVQDSVLVADIFEHLQTWLSFSEMSRTCTTPIMTIHVHGQQVKFFNQVYKYCYDHKTVTDKETYKVDEKERYRGAEVFDPVPGLKRNVVPLDFASLYPSLIIARNMCYSTFVDNDDIPDEMCHVMEWDDHVACSHDPKVIRKNAITEELEKLKKIANAKKMYTQGTRTYKKMMCSYLVMENTKEKTEMSKHLKDLDRENNELLNIVNKQTPGYIESIKKKISDLTSERSEITKKLSKSVMCVSNRRYRFLKEPKGILPTIIQNLLDARKNTRTEIKNYKSRLALLMEKENKSKEDIDEITSIENLLPILDKRQNSYKISANSMYGATGVRVGALPFMPIAMCTTYMGRKSIVEVSQYLKELGGRVVYGDTDSNYVTFDDVVDKNVKVGTEEFSREMKKLWNHAIEIAKTISKKFDNPITLEFENAIYFKFLILTKKRYMYYTCGKDGNILMDANGKPKMGQRGVILSRRDNCKYMKDVYANVIDKIFDEQSENEILNGVVEKMLNLYTRQIEFTSCEKDENYLKNLIVTKSVGDYGGDKATFEPILGKNEKGEDKWKIGNYVVPLITDEIIKTCGTNGLPMTQNEIKDWYLERLPCQVQLEVKIKRRGHNKEEGQRLSYVVTDIGCKGKQSEKIESVEYFKTHSKVLKLDYGYYIERLIEPLDQVFQAVFKNCQEKETIYSDNFRKTKLFSIFEKRGKHSQANFTKELHKLCSVTKPKLINEIKSFSKPDLVFV</sequence>
<gene>
    <name type="primary">DPOL</name>
    <name type="ORF">IIV6-037L</name>
</gene>
<organism>
    <name type="scientific">Invertebrate iridescent virus 6</name>
    <name type="common">IIV-6</name>
    <name type="synonym">Chilo iridescent virus</name>
    <dbReference type="NCBI Taxonomy" id="176652"/>
    <lineage>
        <taxon>Viruses</taxon>
        <taxon>Varidnaviria</taxon>
        <taxon>Bamfordvirae</taxon>
        <taxon>Nucleocytoviricota</taxon>
        <taxon>Megaviricetes</taxon>
        <taxon>Pimascovirales</taxon>
        <taxon>Iridoviridae</taxon>
        <taxon>Betairidovirinae</taxon>
        <taxon>Iridovirus</taxon>
    </lineage>
</organism>
<organismHost>
    <name type="scientific">Acheta domesticus</name>
    <name type="common">House cricket</name>
    <dbReference type="NCBI Taxonomy" id="6997"/>
</organismHost>
<organismHost>
    <name type="scientific">Chilo suppressalis</name>
    <name type="common">Asiatic rice borer moth</name>
    <dbReference type="NCBI Taxonomy" id="168631"/>
</organismHost>
<organismHost>
    <name type="scientific">Gryllus bimaculatus</name>
    <name type="common">Two-spotted cricket</name>
    <dbReference type="NCBI Taxonomy" id="6999"/>
</organismHost>
<organismHost>
    <name type="scientific">Gryllus campestris</name>
    <dbReference type="NCBI Taxonomy" id="58607"/>
</organismHost>
<organismHost>
    <name type="scientific">Spodoptera frugiperda</name>
    <name type="common">Fall armyworm</name>
    <dbReference type="NCBI Taxonomy" id="7108"/>
</organismHost>
<protein>
    <recommendedName>
        <fullName>DNA polymerase 037L</fullName>
        <ecNumber>2.7.7.7</ecNumber>
    </recommendedName>
</protein>
<keyword id="KW-0175">Coiled coil</keyword>
<keyword id="KW-0235">DNA replication</keyword>
<keyword id="KW-0238">DNA-binding</keyword>
<keyword id="KW-0239">DNA-directed DNA polymerase</keyword>
<keyword id="KW-0548">Nucleotidyltransferase</keyword>
<keyword id="KW-1185">Reference proteome</keyword>
<keyword id="KW-0808">Transferase</keyword>
<keyword id="KW-1194">Viral DNA replication</keyword>
<evidence type="ECO:0000255" key="1"/>
<evidence type="ECO:0000305" key="2"/>
<name>DPOL_IIV6</name>